<keyword id="KW-0963">Cytoplasm</keyword>
<keyword id="KW-0378">Hydrolase</keyword>
<keyword id="KW-0546">Nucleotide metabolism</keyword>
<keyword id="KW-1185">Reference proteome</keyword>
<comment type="function">
    <text evidence="1">Nucleoside triphosphate pyrophosphatase that hydrolyzes dTTP and UTP. May have a dual role in cell division arrest and in preventing the incorporation of modified nucleotides into cellular nucleic acids.</text>
</comment>
<comment type="catalytic activity">
    <reaction evidence="1">
        <text>dTTP + H2O = dTMP + diphosphate + H(+)</text>
        <dbReference type="Rhea" id="RHEA:28534"/>
        <dbReference type="ChEBI" id="CHEBI:15377"/>
        <dbReference type="ChEBI" id="CHEBI:15378"/>
        <dbReference type="ChEBI" id="CHEBI:33019"/>
        <dbReference type="ChEBI" id="CHEBI:37568"/>
        <dbReference type="ChEBI" id="CHEBI:63528"/>
        <dbReference type="EC" id="3.6.1.9"/>
    </reaction>
</comment>
<comment type="catalytic activity">
    <reaction evidence="1">
        <text>UTP + H2O = UMP + diphosphate + H(+)</text>
        <dbReference type="Rhea" id="RHEA:29395"/>
        <dbReference type="ChEBI" id="CHEBI:15377"/>
        <dbReference type="ChEBI" id="CHEBI:15378"/>
        <dbReference type="ChEBI" id="CHEBI:33019"/>
        <dbReference type="ChEBI" id="CHEBI:46398"/>
        <dbReference type="ChEBI" id="CHEBI:57865"/>
        <dbReference type="EC" id="3.6.1.9"/>
    </reaction>
</comment>
<comment type="cofactor">
    <cofactor evidence="1">
        <name>a divalent metal cation</name>
        <dbReference type="ChEBI" id="CHEBI:60240"/>
    </cofactor>
</comment>
<comment type="subcellular location">
    <subcellularLocation>
        <location evidence="1">Cytoplasm</location>
    </subcellularLocation>
</comment>
<comment type="similarity">
    <text evidence="1">Belongs to the Maf family. YhdE subfamily.</text>
</comment>
<sequence length="192" mass="20248">MTLILGSASPRRRELLAQLGVTPDAILPPDIDEEPRRGELPRPYCARLAAEKAAAVAAGPEDVVLCADTTVALGRRILGKPADAGEAARFLVALGGRRHEVITAVAVRRGDRLWQREVVSQVKMKRLSDLELNAYLASGEWEGKAGGYAIQGLASAFIPWISGSFTGIVGLPLAETATLLAAAGVPLYRAAA</sequence>
<organism>
    <name type="scientific">Cereibacter sphaeroides (strain ATCC 17023 / DSM 158 / JCM 6121 / CCUG 31486 / LMG 2827 / NBRC 12203 / NCIMB 8253 / ATH 2.4.1.)</name>
    <name type="common">Rhodobacter sphaeroides</name>
    <dbReference type="NCBI Taxonomy" id="272943"/>
    <lineage>
        <taxon>Bacteria</taxon>
        <taxon>Pseudomonadati</taxon>
        <taxon>Pseudomonadota</taxon>
        <taxon>Alphaproteobacteria</taxon>
        <taxon>Rhodobacterales</taxon>
        <taxon>Paracoccaceae</taxon>
        <taxon>Cereibacter</taxon>
    </lineage>
</organism>
<dbReference type="EC" id="3.6.1.9" evidence="1"/>
<dbReference type="EMBL" id="CP000143">
    <property type="protein sequence ID" value="ABA79798.1"/>
    <property type="molecule type" value="Genomic_DNA"/>
</dbReference>
<dbReference type="RefSeq" id="WP_009561904.1">
    <property type="nucleotide sequence ID" value="NC_007493.2"/>
</dbReference>
<dbReference type="RefSeq" id="YP_353699.1">
    <property type="nucleotide sequence ID" value="NC_007493.2"/>
</dbReference>
<dbReference type="SMR" id="Q3J086"/>
<dbReference type="STRING" id="272943.RSP_0625"/>
<dbReference type="EnsemblBacteria" id="ABA79798">
    <property type="protein sequence ID" value="ABA79798"/>
    <property type="gene ID" value="RSP_0625"/>
</dbReference>
<dbReference type="GeneID" id="3718253"/>
<dbReference type="KEGG" id="rsp:RSP_0625"/>
<dbReference type="PATRIC" id="fig|272943.9.peg.2572"/>
<dbReference type="eggNOG" id="COG0424">
    <property type="taxonomic scope" value="Bacteria"/>
</dbReference>
<dbReference type="OrthoDB" id="9807767at2"/>
<dbReference type="PhylomeDB" id="Q3J086"/>
<dbReference type="Proteomes" id="UP000002703">
    <property type="component" value="Chromosome 1"/>
</dbReference>
<dbReference type="GO" id="GO:0005737">
    <property type="term" value="C:cytoplasm"/>
    <property type="evidence" value="ECO:0007669"/>
    <property type="project" value="UniProtKB-SubCell"/>
</dbReference>
<dbReference type="GO" id="GO:0036218">
    <property type="term" value="F:dTTP diphosphatase activity"/>
    <property type="evidence" value="ECO:0007669"/>
    <property type="project" value="RHEA"/>
</dbReference>
<dbReference type="GO" id="GO:0036221">
    <property type="term" value="F:UTP diphosphatase activity"/>
    <property type="evidence" value="ECO:0007669"/>
    <property type="project" value="RHEA"/>
</dbReference>
<dbReference type="GO" id="GO:0009117">
    <property type="term" value="P:nucleotide metabolic process"/>
    <property type="evidence" value="ECO:0007669"/>
    <property type="project" value="UniProtKB-KW"/>
</dbReference>
<dbReference type="CDD" id="cd00555">
    <property type="entry name" value="Maf"/>
    <property type="match status" value="1"/>
</dbReference>
<dbReference type="Gene3D" id="3.90.950.10">
    <property type="match status" value="1"/>
</dbReference>
<dbReference type="HAMAP" id="MF_00528">
    <property type="entry name" value="Maf"/>
    <property type="match status" value="1"/>
</dbReference>
<dbReference type="InterPro" id="IPR029001">
    <property type="entry name" value="ITPase-like_fam"/>
</dbReference>
<dbReference type="InterPro" id="IPR003697">
    <property type="entry name" value="Maf-like"/>
</dbReference>
<dbReference type="NCBIfam" id="TIGR00172">
    <property type="entry name" value="maf"/>
    <property type="match status" value="1"/>
</dbReference>
<dbReference type="PANTHER" id="PTHR43213">
    <property type="entry name" value="BIFUNCTIONAL DTTP/UTP PYROPHOSPHATASE/METHYLTRANSFERASE PROTEIN-RELATED"/>
    <property type="match status" value="1"/>
</dbReference>
<dbReference type="PANTHER" id="PTHR43213:SF5">
    <property type="entry name" value="BIFUNCTIONAL DTTP_UTP PYROPHOSPHATASE_METHYLTRANSFERASE PROTEIN-RELATED"/>
    <property type="match status" value="1"/>
</dbReference>
<dbReference type="Pfam" id="PF02545">
    <property type="entry name" value="Maf"/>
    <property type="match status" value="1"/>
</dbReference>
<dbReference type="PIRSF" id="PIRSF006305">
    <property type="entry name" value="Maf"/>
    <property type="match status" value="1"/>
</dbReference>
<dbReference type="SUPFAM" id="SSF52972">
    <property type="entry name" value="ITPase-like"/>
    <property type="match status" value="1"/>
</dbReference>
<evidence type="ECO:0000255" key="1">
    <source>
        <dbReference type="HAMAP-Rule" id="MF_00528"/>
    </source>
</evidence>
<protein>
    <recommendedName>
        <fullName evidence="1">dTTP/UTP pyrophosphatase</fullName>
        <shortName evidence="1">dTTPase/UTPase</shortName>
        <ecNumber evidence="1">3.6.1.9</ecNumber>
    </recommendedName>
    <alternativeName>
        <fullName evidence="1">Nucleoside triphosphate pyrophosphatase</fullName>
    </alternativeName>
    <alternativeName>
        <fullName evidence="1">Nucleotide pyrophosphatase</fullName>
        <shortName evidence="1">Nucleotide PPase</shortName>
    </alternativeName>
</protein>
<gene>
    <name type="ordered locus">RHOS4_22300</name>
    <name type="ordered locus">RSP_0625</name>
</gene>
<accession>Q3J086</accession>
<name>NTPPA_CERS4</name>
<proteinExistence type="inferred from homology"/>
<reference key="1">
    <citation type="submission" date="2005-09" db="EMBL/GenBank/DDBJ databases">
        <title>Complete sequence of chromosome 1 of Rhodobacter sphaeroides 2.4.1.</title>
        <authorList>
            <person name="Copeland A."/>
            <person name="Lucas S."/>
            <person name="Lapidus A."/>
            <person name="Barry K."/>
            <person name="Detter J.C."/>
            <person name="Glavina T."/>
            <person name="Hammon N."/>
            <person name="Israni S."/>
            <person name="Pitluck S."/>
            <person name="Richardson P."/>
            <person name="Mackenzie C."/>
            <person name="Choudhary M."/>
            <person name="Larimer F."/>
            <person name="Hauser L.J."/>
            <person name="Land M."/>
            <person name="Donohue T.J."/>
            <person name="Kaplan S."/>
        </authorList>
    </citation>
    <scope>NUCLEOTIDE SEQUENCE [LARGE SCALE GENOMIC DNA]</scope>
    <source>
        <strain>ATCC 17023 / DSM 158 / JCM 6121 / CCUG 31486 / LMG 2827 / NBRC 12203 / NCIMB 8253 / ATH 2.4.1.</strain>
    </source>
</reference>
<feature type="chain" id="PRO_0000267395" description="dTTP/UTP pyrophosphatase">
    <location>
        <begin position="1"/>
        <end position="192"/>
    </location>
</feature>
<feature type="active site" description="Proton acceptor" evidence="1">
    <location>
        <position position="68"/>
    </location>
</feature>
<feature type="site" description="Important for substrate specificity" evidence="1">
    <location>
        <position position="11"/>
    </location>
</feature>
<feature type="site" description="Important for substrate specificity" evidence="1">
    <location>
        <position position="69"/>
    </location>
</feature>
<feature type="site" description="Important for substrate specificity" evidence="1">
    <location>
        <position position="151"/>
    </location>
</feature>